<reference key="1">
    <citation type="journal article" date="1992" name="Science">
        <title>Analysis of the Escherichia coli genome: DNA sequence of the region from 84.5 to 86.5 minutes.</title>
        <authorList>
            <person name="Daniels D.L."/>
            <person name="Plunkett G. III"/>
            <person name="Burland V.D."/>
            <person name="Blattner F.R."/>
        </authorList>
    </citation>
    <scope>NUCLEOTIDE SEQUENCE [LARGE SCALE GENOMIC DNA]</scope>
    <source>
        <strain>K12 / MG1655 / ATCC 47076</strain>
    </source>
</reference>
<reference key="2">
    <citation type="journal article" date="1997" name="Science">
        <title>The complete genome sequence of Escherichia coli K-12.</title>
        <authorList>
            <person name="Blattner F.R."/>
            <person name="Plunkett G. III"/>
            <person name="Bloch C.A."/>
            <person name="Perna N.T."/>
            <person name="Burland V."/>
            <person name="Riley M."/>
            <person name="Collado-Vides J."/>
            <person name="Glasner J.D."/>
            <person name="Rode C.K."/>
            <person name="Mayhew G.F."/>
            <person name="Gregor J."/>
            <person name="Davis N.W."/>
            <person name="Kirkpatrick H.A."/>
            <person name="Goeden M.A."/>
            <person name="Rose D.J."/>
            <person name="Mau B."/>
            <person name="Shao Y."/>
        </authorList>
    </citation>
    <scope>NUCLEOTIDE SEQUENCE [LARGE SCALE GENOMIC DNA]</scope>
    <scope>SEQUENCE REVISION TO 120-121</scope>
    <source>
        <strain>K12 / MG1655 / ATCC 47076</strain>
    </source>
</reference>
<reference key="3">
    <citation type="journal article" date="2006" name="Mol. Syst. Biol.">
        <title>Highly accurate genome sequences of Escherichia coli K-12 strains MG1655 and W3110.</title>
        <authorList>
            <person name="Hayashi K."/>
            <person name="Morooka N."/>
            <person name="Yamamoto Y."/>
            <person name="Fujita K."/>
            <person name="Isono K."/>
            <person name="Choi S."/>
            <person name="Ohtsubo E."/>
            <person name="Baba T."/>
            <person name="Wanner B.L."/>
            <person name="Mori H."/>
            <person name="Horiuchi T."/>
        </authorList>
    </citation>
    <scope>NUCLEOTIDE SEQUENCE [LARGE SCALE GENOMIC DNA]</scope>
    <source>
        <strain>K12 / W3110 / ATCC 27325 / DSM 5911</strain>
    </source>
</reference>
<reference key="4">
    <citation type="journal article" date="1988" name="J. Bacteriol.">
        <title>Characterization of an Escherichia coli rff mutant defective in transfer of N-acetylmannosaminuronic acid (ManNAcA) from UDP-ManNAcA to a lipid-linked intermediate involved in enterobacterial common antigen synthesis.</title>
        <authorList>
            <person name="Barr K."/>
            <person name="Ward S."/>
            <person name="Meier-Dieter U."/>
            <person name="Mayer H."/>
            <person name="Rick P.D."/>
        </authorList>
    </citation>
    <scope>CATALYTIC ACTIVITY</scope>
</reference>
<reference key="5">
    <citation type="journal article" date="1992" name="J. Biol. Chem.">
        <title>Nucleotide sequence of the Escherichia coli rfe gene involved in the synthesis of enterobacterial common antigen. Molecular cloning of the rfe-rff gene cluster.</title>
        <authorList>
            <person name="Meier-Dieter U."/>
            <person name="Barr K."/>
            <person name="Starman R."/>
            <person name="Hatch L."/>
            <person name="Rick P.D."/>
        </authorList>
    </citation>
    <scope>FUNCTION</scope>
</reference>
<organism>
    <name type="scientific">Escherichia coli (strain K12)</name>
    <dbReference type="NCBI Taxonomy" id="83333"/>
    <lineage>
        <taxon>Bacteria</taxon>
        <taxon>Pseudomonadati</taxon>
        <taxon>Pseudomonadota</taxon>
        <taxon>Gammaproteobacteria</taxon>
        <taxon>Enterobacterales</taxon>
        <taxon>Enterobacteriaceae</taxon>
        <taxon>Escherichia</taxon>
    </lineage>
</organism>
<gene>
    <name evidence="1" type="primary">wecG</name>
    <name evidence="1" type="synonym">rffM</name>
    <name type="ordered locus">b3794</name>
    <name type="ordered locus">JW3770</name>
</gene>
<keyword id="KW-0328">Glycosyltransferase</keyword>
<keyword id="KW-1185">Reference proteome</keyword>
<keyword id="KW-0808">Transferase</keyword>
<comment type="function">
    <text evidence="1 2">Catalyzes the synthesis of Und-PP-GlcNAc-ManNAcA (Lipid II), the second lipid-linked intermediate involved in enterobacterial common antigen (ECA) synthesis.</text>
</comment>
<comment type="catalytic activity">
    <reaction evidence="1 3">
        <text>UDP-N-acetyl-alpha-D-mannosaminouronate + N-acetyl-alpha-D-glucosaminyl-di-trans,octa-cis-undecaprenyl diphosphate = beta-D-ManNAcA-(1-&gt;4)-alpha-D-GlcNAc-di-trans,octa-cis-undecaprenyl diphosphate + UDP + H(+)</text>
        <dbReference type="Rhea" id="RHEA:28366"/>
        <dbReference type="ChEBI" id="CHEBI:15378"/>
        <dbReference type="ChEBI" id="CHEBI:58223"/>
        <dbReference type="ChEBI" id="CHEBI:61495"/>
        <dbReference type="ChEBI" id="CHEBI:62959"/>
        <dbReference type="ChEBI" id="CHEBI:70731"/>
        <dbReference type="EC" id="2.4.1.180"/>
    </reaction>
</comment>
<comment type="pathway">
    <text evidence="1">Bacterial outer membrane biogenesis; enterobacterial common antigen biosynthesis.</text>
</comment>
<comment type="similarity">
    <text evidence="1">Belongs to the glycosyltransferase 26 family.</text>
</comment>
<feature type="chain" id="PRO_0000208426" description="UDP-N-acetyl-D-mannosaminuronic acid transferase">
    <location>
        <begin position="1"/>
        <end position="246"/>
    </location>
</feature>
<feature type="sequence conflict" description="In Ref. 1; AAA67594." evidence="4" ref="1">
    <original>VL</original>
    <variation>AV</variation>
    <location>
        <begin position="120"/>
        <end position="121"/>
    </location>
</feature>
<accession>P27836</accession>
<accession>Q2M8A3</accession>
<proteinExistence type="evidence at protein level"/>
<name>WECG_ECOLI</name>
<evidence type="ECO:0000255" key="1">
    <source>
        <dbReference type="HAMAP-Rule" id="MF_01001"/>
    </source>
</evidence>
<evidence type="ECO:0000269" key="2">
    <source>
    </source>
</evidence>
<evidence type="ECO:0000269" key="3">
    <source>
    </source>
</evidence>
<evidence type="ECO:0000305" key="4"/>
<protein>
    <recommendedName>
        <fullName evidence="1">UDP-N-acetyl-D-mannosaminuronic acid transferase</fullName>
        <shortName evidence="1">UDP-ManNAcA transferase</shortName>
        <ecNumber evidence="1">2.4.1.180</ecNumber>
    </recommendedName>
</protein>
<sequence>MNNNTTAPTYTLRGLQLIGWRDMQHALDYLFADGQLKQGTLVAINAEKMLTIEDNAEVRELINAAEFKYADGISVVRSVRKKYPQAQVSRVAGADLWEELMARAGKEGTPVFLVGGKPEVLAQTEAKLRNQWNVNIVGSQDGYFKPEQRQALFERIHASGAQIVTVAMGSPKQEIIMRDCRLVHPDALYMGVGGTYDVFTGHVKRAPKIWQTLGLEWLYRLLSQPSRIKRQLRLLRYLRWHYTGNL</sequence>
<dbReference type="EC" id="2.4.1.180" evidence="1"/>
<dbReference type="EMBL" id="M87049">
    <property type="protein sequence ID" value="AAA67594.1"/>
    <property type="molecule type" value="Genomic_DNA"/>
</dbReference>
<dbReference type="EMBL" id="U00096">
    <property type="protein sequence ID" value="AAC76801.1"/>
    <property type="molecule type" value="Genomic_DNA"/>
</dbReference>
<dbReference type="EMBL" id="AP009048">
    <property type="protein sequence ID" value="BAE77503.1"/>
    <property type="molecule type" value="Genomic_DNA"/>
</dbReference>
<dbReference type="PIR" id="G65183">
    <property type="entry name" value="G65183"/>
</dbReference>
<dbReference type="RefSeq" id="NP_418242.1">
    <property type="nucleotide sequence ID" value="NC_000913.3"/>
</dbReference>
<dbReference type="RefSeq" id="WP_001064040.1">
    <property type="nucleotide sequence ID" value="NZ_SSZK01000025.1"/>
</dbReference>
<dbReference type="SMR" id="P27836"/>
<dbReference type="BioGRID" id="4261340">
    <property type="interactions" value="204"/>
</dbReference>
<dbReference type="BioGRID" id="852599">
    <property type="interactions" value="1"/>
</dbReference>
<dbReference type="DIP" id="DIP-11132N"/>
<dbReference type="FunCoup" id="P27836">
    <property type="interactions" value="178"/>
</dbReference>
<dbReference type="IntAct" id="P27836">
    <property type="interactions" value="15"/>
</dbReference>
<dbReference type="STRING" id="511145.b3794"/>
<dbReference type="CAZy" id="GT26">
    <property type="family name" value="Glycosyltransferase Family 26"/>
</dbReference>
<dbReference type="jPOST" id="P27836"/>
<dbReference type="PaxDb" id="511145-b3794"/>
<dbReference type="DNASU" id="948301"/>
<dbReference type="EnsemblBacteria" id="AAC76801">
    <property type="protein sequence ID" value="AAC76801"/>
    <property type="gene ID" value="b3794"/>
</dbReference>
<dbReference type="GeneID" id="948301"/>
<dbReference type="KEGG" id="ecj:JW3770"/>
<dbReference type="KEGG" id="eco:b3794"/>
<dbReference type="KEGG" id="ecoc:C3026_20545"/>
<dbReference type="PATRIC" id="fig|1411691.4.peg.2911"/>
<dbReference type="EchoBASE" id="EB1427"/>
<dbReference type="eggNOG" id="COG1922">
    <property type="taxonomic scope" value="Bacteria"/>
</dbReference>
<dbReference type="HOGENOM" id="CLU_063203_3_2_6"/>
<dbReference type="InParanoid" id="P27836"/>
<dbReference type="OMA" id="LYQEPWR"/>
<dbReference type="OrthoDB" id="9808602at2"/>
<dbReference type="PhylomeDB" id="P27836"/>
<dbReference type="BioCyc" id="EcoCyc:UDPMANACATRANS-MONOMER"/>
<dbReference type="BioCyc" id="MetaCyc:UDPMANACATRANS-MONOMER"/>
<dbReference type="UniPathway" id="UPA00566"/>
<dbReference type="PRO" id="PR:P27836"/>
<dbReference type="Proteomes" id="UP000000625">
    <property type="component" value="Chromosome"/>
</dbReference>
<dbReference type="GO" id="GO:0016758">
    <property type="term" value="F:hexosyltransferase activity"/>
    <property type="evidence" value="ECO:0000315"/>
    <property type="project" value="EcoCyc"/>
</dbReference>
<dbReference type="GO" id="GO:0047241">
    <property type="term" value="F:lipopolysaccharide N-acetylmannosaminouronosyltransferase activity"/>
    <property type="evidence" value="ECO:0007669"/>
    <property type="project" value="UniProtKB-UniRule"/>
</dbReference>
<dbReference type="GO" id="GO:0009246">
    <property type="term" value="P:enterobacterial common antigen biosynthetic process"/>
    <property type="evidence" value="ECO:0000315"/>
    <property type="project" value="EcoCyc"/>
</dbReference>
<dbReference type="CDD" id="cd06533">
    <property type="entry name" value="Glyco_transf_WecG_TagA"/>
    <property type="match status" value="1"/>
</dbReference>
<dbReference type="HAMAP" id="MF_01001">
    <property type="entry name" value="WecG_RffM"/>
    <property type="match status" value="1"/>
</dbReference>
<dbReference type="InterPro" id="IPR023085">
    <property type="entry name" value="UDP-ManNAcA_Trfase_WecG"/>
</dbReference>
<dbReference type="InterPro" id="IPR004629">
    <property type="entry name" value="WecG_TagA_CpsF"/>
</dbReference>
<dbReference type="NCBIfam" id="NF002980">
    <property type="entry name" value="PRK03692.1"/>
    <property type="match status" value="1"/>
</dbReference>
<dbReference type="NCBIfam" id="TIGR00696">
    <property type="entry name" value="wecG_tagA_cpsF"/>
    <property type="match status" value="1"/>
</dbReference>
<dbReference type="PANTHER" id="PTHR34136">
    <property type="match status" value="1"/>
</dbReference>
<dbReference type="PANTHER" id="PTHR34136:SF1">
    <property type="entry name" value="UDP-N-ACETYL-D-MANNOSAMINURONIC ACID TRANSFERASE"/>
    <property type="match status" value="1"/>
</dbReference>
<dbReference type="Pfam" id="PF03808">
    <property type="entry name" value="Glyco_tran_WecG"/>
    <property type="match status" value="1"/>
</dbReference>